<accession>Q493Q4</accession>
<keyword id="KW-0131">Cell cycle</keyword>
<keyword id="KW-0132">Cell division</keyword>
<keyword id="KW-0997">Cell inner membrane</keyword>
<keyword id="KW-1003">Cell membrane</keyword>
<keyword id="KW-0133">Cell shape</keyword>
<keyword id="KW-0961">Cell wall biogenesis/degradation</keyword>
<keyword id="KW-0460">Magnesium</keyword>
<keyword id="KW-0472">Membrane</keyword>
<keyword id="KW-0479">Metal-binding</keyword>
<keyword id="KW-0573">Peptidoglycan synthesis</keyword>
<keyword id="KW-1185">Reference proteome</keyword>
<keyword id="KW-0808">Transferase</keyword>
<keyword id="KW-0812">Transmembrane</keyword>
<keyword id="KW-1133">Transmembrane helix</keyword>
<feature type="chain" id="PRO_0000235438" description="Phospho-N-acetylmuramoyl-pentapeptide-transferase">
    <location>
        <begin position="1"/>
        <end position="362"/>
    </location>
</feature>
<feature type="transmembrane region" description="Helical" evidence="1">
    <location>
        <begin position="28"/>
        <end position="48"/>
    </location>
</feature>
<feature type="transmembrane region" description="Helical" evidence="1">
    <location>
        <begin position="72"/>
        <end position="92"/>
    </location>
</feature>
<feature type="transmembrane region" description="Helical" evidence="1">
    <location>
        <begin position="94"/>
        <end position="114"/>
    </location>
</feature>
<feature type="transmembrane region" description="Helical" evidence="1">
    <location>
        <begin position="131"/>
        <end position="151"/>
    </location>
</feature>
<feature type="transmembrane region" description="Helical" evidence="1">
    <location>
        <begin position="169"/>
        <end position="189"/>
    </location>
</feature>
<feature type="transmembrane region" description="Helical" evidence="1">
    <location>
        <begin position="200"/>
        <end position="220"/>
    </location>
</feature>
<feature type="transmembrane region" description="Helical" evidence="1">
    <location>
        <begin position="236"/>
        <end position="256"/>
    </location>
</feature>
<feature type="transmembrane region" description="Helical" evidence="1">
    <location>
        <begin position="264"/>
        <end position="284"/>
    </location>
</feature>
<feature type="transmembrane region" description="Helical" evidence="1">
    <location>
        <begin position="290"/>
        <end position="310"/>
    </location>
</feature>
<feature type="transmembrane region" description="Helical" evidence="1">
    <location>
        <begin position="339"/>
        <end position="359"/>
    </location>
</feature>
<organism>
    <name type="scientific">Blochmanniella pennsylvanica (strain BPEN)</name>
    <dbReference type="NCBI Taxonomy" id="291272"/>
    <lineage>
        <taxon>Bacteria</taxon>
        <taxon>Pseudomonadati</taxon>
        <taxon>Pseudomonadota</taxon>
        <taxon>Gammaproteobacteria</taxon>
        <taxon>Enterobacterales</taxon>
        <taxon>Enterobacteriaceae</taxon>
        <taxon>ant endosymbionts</taxon>
        <taxon>Candidatus Blochmanniella</taxon>
    </lineage>
</organism>
<gene>
    <name evidence="1" type="primary">mraY</name>
    <name type="ordered locus">BPEN_143</name>
</gene>
<dbReference type="EC" id="2.7.8.13" evidence="1"/>
<dbReference type="EMBL" id="CP000016">
    <property type="protein sequence ID" value="AAZ40783.1"/>
    <property type="molecule type" value="Genomic_DNA"/>
</dbReference>
<dbReference type="RefSeq" id="WP_011282690.1">
    <property type="nucleotide sequence ID" value="NC_007292.1"/>
</dbReference>
<dbReference type="SMR" id="Q493Q4"/>
<dbReference type="STRING" id="291272.BPEN_143"/>
<dbReference type="KEGG" id="bpn:BPEN_143"/>
<dbReference type="eggNOG" id="COG0472">
    <property type="taxonomic scope" value="Bacteria"/>
</dbReference>
<dbReference type="HOGENOM" id="CLU_023982_0_0_6"/>
<dbReference type="OrthoDB" id="9805475at2"/>
<dbReference type="UniPathway" id="UPA00219"/>
<dbReference type="Proteomes" id="UP000007794">
    <property type="component" value="Chromosome"/>
</dbReference>
<dbReference type="GO" id="GO:0005886">
    <property type="term" value="C:plasma membrane"/>
    <property type="evidence" value="ECO:0007669"/>
    <property type="project" value="UniProtKB-SubCell"/>
</dbReference>
<dbReference type="GO" id="GO:0046872">
    <property type="term" value="F:metal ion binding"/>
    <property type="evidence" value="ECO:0007669"/>
    <property type="project" value="UniProtKB-KW"/>
</dbReference>
<dbReference type="GO" id="GO:0008963">
    <property type="term" value="F:phospho-N-acetylmuramoyl-pentapeptide-transferase activity"/>
    <property type="evidence" value="ECO:0007669"/>
    <property type="project" value="UniProtKB-UniRule"/>
</dbReference>
<dbReference type="GO" id="GO:0051992">
    <property type="term" value="F:UDP-N-acetylmuramoyl-L-alanyl-D-glutamyl-meso-2,6-diaminopimelyl-D-alanyl-D-alanine:undecaprenyl-phosphate transferase activity"/>
    <property type="evidence" value="ECO:0007669"/>
    <property type="project" value="RHEA"/>
</dbReference>
<dbReference type="GO" id="GO:0051301">
    <property type="term" value="P:cell division"/>
    <property type="evidence" value="ECO:0007669"/>
    <property type="project" value="UniProtKB-KW"/>
</dbReference>
<dbReference type="GO" id="GO:0071555">
    <property type="term" value="P:cell wall organization"/>
    <property type="evidence" value="ECO:0007669"/>
    <property type="project" value="UniProtKB-KW"/>
</dbReference>
<dbReference type="GO" id="GO:0009252">
    <property type="term" value="P:peptidoglycan biosynthetic process"/>
    <property type="evidence" value="ECO:0007669"/>
    <property type="project" value="UniProtKB-UniRule"/>
</dbReference>
<dbReference type="GO" id="GO:0008360">
    <property type="term" value="P:regulation of cell shape"/>
    <property type="evidence" value="ECO:0007669"/>
    <property type="project" value="UniProtKB-KW"/>
</dbReference>
<dbReference type="CDD" id="cd06852">
    <property type="entry name" value="GT_MraY"/>
    <property type="match status" value="1"/>
</dbReference>
<dbReference type="HAMAP" id="MF_00038">
    <property type="entry name" value="MraY"/>
    <property type="match status" value="1"/>
</dbReference>
<dbReference type="InterPro" id="IPR000715">
    <property type="entry name" value="Glycosyl_transferase_4"/>
</dbReference>
<dbReference type="InterPro" id="IPR003524">
    <property type="entry name" value="PNAcMuramoyl-5peptid_Trfase"/>
</dbReference>
<dbReference type="InterPro" id="IPR018480">
    <property type="entry name" value="PNAcMuramoyl-5peptid_Trfase_CS"/>
</dbReference>
<dbReference type="NCBIfam" id="TIGR00445">
    <property type="entry name" value="mraY"/>
    <property type="match status" value="1"/>
</dbReference>
<dbReference type="PANTHER" id="PTHR22926">
    <property type="entry name" value="PHOSPHO-N-ACETYLMURAMOYL-PENTAPEPTIDE-TRANSFERASE"/>
    <property type="match status" value="1"/>
</dbReference>
<dbReference type="PANTHER" id="PTHR22926:SF5">
    <property type="entry name" value="PHOSPHO-N-ACETYLMURAMOYL-PENTAPEPTIDE-TRANSFERASE HOMOLOG"/>
    <property type="match status" value="1"/>
</dbReference>
<dbReference type="Pfam" id="PF00953">
    <property type="entry name" value="Glycos_transf_4"/>
    <property type="match status" value="1"/>
</dbReference>
<dbReference type="PROSITE" id="PS01347">
    <property type="entry name" value="MRAY_1"/>
    <property type="match status" value="1"/>
</dbReference>
<dbReference type="PROSITE" id="PS01348">
    <property type="entry name" value="MRAY_2"/>
    <property type="match status" value="1"/>
</dbReference>
<sequence length="362" mass="40609">MLFWLTENVLALYSSRFNIVCHLTFRAIISFLSALFISLGIGHCVITWFHNLCFFQIVRCDGPKSHTQKQSTPTMGGIVLILSIVISVMVCADLSNIYVWYVFFILITYGILGLTDDILKIKKKSSKGLSVLHKYFWQSLIALTLVIIIFMSDRSLTSTQLIVPFFKNFMPQLGIWYIFLAYFVVVGTSNAVNLSDGLDGLAIMPIMFVAAGLAVVAWISNDIHFASHLNIPYICFSGELIIICSAIIGAGLGFLWFNTYPAQIFMGDVGSLSLGGTLGIIAVLLHQECLLLIMGGMFVIETLSVILQVIYFRLFGQRIFKMAPIHHHFELKGCPEPRIIVRFWIISLMLVFVGLITLKIRQ</sequence>
<reference key="1">
    <citation type="journal article" date="2005" name="Genome Res.">
        <title>Genome sequence of Blochmannia pennsylvanicus indicates parallel evolutionary trends among bacterial mutualists of insects.</title>
        <authorList>
            <person name="Degnan P.H."/>
            <person name="Lazarus A.B."/>
            <person name="Wernegreen J.J."/>
        </authorList>
    </citation>
    <scope>NUCLEOTIDE SEQUENCE [LARGE SCALE GENOMIC DNA]</scope>
    <source>
        <strain>BPEN</strain>
    </source>
</reference>
<name>MRAY_BLOPB</name>
<proteinExistence type="inferred from homology"/>
<protein>
    <recommendedName>
        <fullName evidence="1">Phospho-N-acetylmuramoyl-pentapeptide-transferase</fullName>
        <ecNumber evidence="1">2.7.8.13</ecNumber>
    </recommendedName>
    <alternativeName>
        <fullName evidence="1">UDP-MurNAc-pentapeptide phosphotransferase</fullName>
    </alternativeName>
</protein>
<comment type="function">
    <text evidence="1">Catalyzes the initial step of the lipid cycle reactions in the biosynthesis of the cell wall peptidoglycan: transfers peptidoglycan precursor phospho-MurNAc-pentapeptide from UDP-MurNAc-pentapeptide onto the lipid carrier undecaprenyl phosphate, yielding undecaprenyl-pyrophosphoryl-MurNAc-pentapeptide, known as lipid I.</text>
</comment>
<comment type="catalytic activity">
    <reaction evidence="1">
        <text>UDP-N-acetyl-alpha-D-muramoyl-L-alanyl-gamma-D-glutamyl-meso-2,6-diaminopimeloyl-D-alanyl-D-alanine + di-trans,octa-cis-undecaprenyl phosphate = di-trans,octa-cis-undecaprenyl diphospho-N-acetyl-alpha-D-muramoyl-L-alanyl-D-glutamyl-meso-2,6-diaminopimeloyl-D-alanyl-D-alanine + UMP</text>
        <dbReference type="Rhea" id="RHEA:28386"/>
        <dbReference type="ChEBI" id="CHEBI:57865"/>
        <dbReference type="ChEBI" id="CHEBI:60392"/>
        <dbReference type="ChEBI" id="CHEBI:61386"/>
        <dbReference type="ChEBI" id="CHEBI:61387"/>
        <dbReference type="EC" id="2.7.8.13"/>
    </reaction>
</comment>
<comment type="cofactor">
    <cofactor evidence="1">
        <name>Mg(2+)</name>
        <dbReference type="ChEBI" id="CHEBI:18420"/>
    </cofactor>
</comment>
<comment type="pathway">
    <text evidence="1">Cell wall biogenesis; peptidoglycan biosynthesis.</text>
</comment>
<comment type="subcellular location">
    <subcellularLocation>
        <location evidence="1">Cell inner membrane</location>
        <topology evidence="1">Multi-pass membrane protein</topology>
    </subcellularLocation>
</comment>
<comment type="similarity">
    <text evidence="1">Belongs to the glycosyltransferase 4 family. MraY subfamily.</text>
</comment>
<evidence type="ECO:0000255" key="1">
    <source>
        <dbReference type="HAMAP-Rule" id="MF_00038"/>
    </source>
</evidence>